<name>3SO3_BUNCA</name>
<proteinExistence type="evidence at protein level"/>
<comment type="subcellular location">
    <subcellularLocation>
        <location evidence="1">Secreted</location>
    </subcellularLocation>
</comment>
<comment type="tissue specificity">
    <text evidence="2">Expressed by the venom gland.</text>
</comment>
<comment type="mass spectrometry" mass="7207.4" method="Electrospray" evidence="1"/>
<comment type="miscellaneous">
    <text evidence="2">Is classified as a P-type cytotoxin, since a proline residue stands at position 33 (Pro-31 in standard classification).</text>
</comment>
<comment type="similarity">
    <text evidence="2">Belongs to the three-finger toxin family. Short-chain subfamily. Orphan group III sub-subfamily.</text>
</comment>
<accession>P83346</accession>
<dbReference type="PDB" id="1VYC">
    <property type="method" value="NMR"/>
    <property type="chains" value="A=1-65"/>
</dbReference>
<dbReference type="PDB" id="2H8U">
    <property type="method" value="X-ray"/>
    <property type="resolution" value="2.10 A"/>
    <property type="chains" value="A/B=1-65"/>
</dbReference>
<dbReference type="PDBsum" id="1VYC"/>
<dbReference type="PDBsum" id="2H8U"/>
<dbReference type="SMR" id="P83346"/>
<dbReference type="TCDB" id="1.C.74.1.5">
    <property type="family name" value="the snake cytotoxin (sct) family"/>
</dbReference>
<dbReference type="EvolutionaryTrace" id="P83346"/>
<dbReference type="GO" id="GO:0005576">
    <property type="term" value="C:extracellular region"/>
    <property type="evidence" value="ECO:0007669"/>
    <property type="project" value="UniProtKB-SubCell"/>
</dbReference>
<dbReference type="GO" id="GO:0090729">
    <property type="term" value="F:toxin activity"/>
    <property type="evidence" value="ECO:0007669"/>
    <property type="project" value="UniProtKB-KW"/>
</dbReference>
<dbReference type="CDD" id="cd00206">
    <property type="entry name" value="TFP_snake_toxin"/>
    <property type="match status" value="1"/>
</dbReference>
<dbReference type="FunFam" id="2.10.60.10:FF:000024">
    <property type="entry name" value="Cytotoxin 1"/>
    <property type="match status" value="1"/>
</dbReference>
<dbReference type="Gene3D" id="2.10.60.10">
    <property type="entry name" value="CD59"/>
    <property type="match status" value="1"/>
</dbReference>
<dbReference type="InterPro" id="IPR003571">
    <property type="entry name" value="Snake_3FTx"/>
</dbReference>
<dbReference type="InterPro" id="IPR045860">
    <property type="entry name" value="Snake_toxin-like_sf"/>
</dbReference>
<dbReference type="InterPro" id="IPR018354">
    <property type="entry name" value="Snake_toxin_con_site"/>
</dbReference>
<dbReference type="InterPro" id="IPR054131">
    <property type="entry name" value="Toxin_cobra-type"/>
</dbReference>
<dbReference type="Pfam" id="PF21947">
    <property type="entry name" value="Toxin_cobra-type"/>
    <property type="match status" value="1"/>
</dbReference>
<dbReference type="SUPFAM" id="SSF57302">
    <property type="entry name" value="Snake toxin-like"/>
    <property type="match status" value="1"/>
</dbReference>
<dbReference type="PROSITE" id="PS00272">
    <property type="entry name" value="SNAKE_TOXIN"/>
    <property type="match status" value="1"/>
</dbReference>
<organism>
    <name type="scientific">Bungarus candidus</name>
    <name type="common">Malayan krait</name>
    <dbReference type="NCBI Taxonomy" id="92438"/>
    <lineage>
        <taxon>Eukaryota</taxon>
        <taxon>Metazoa</taxon>
        <taxon>Chordata</taxon>
        <taxon>Craniata</taxon>
        <taxon>Vertebrata</taxon>
        <taxon>Euteleostomi</taxon>
        <taxon>Lepidosauria</taxon>
        <taxon>Squamata</taxon>
        <taxon>Bifurcata</taxon>
        <taxon>Unidentata</taxon>
        <taxon>Episquamata</taxon>
        <taxon>Toxicofera</taxon>
        <taxon>Serpentes</taxon>
        <taxon>Colubroidea</taxon>
        <taxon>Elapidae</taxon>
        <taxon>Bungarinae</taxon>
        <taxon>Bungarus</taxon>
    </lineage>
</organism>
<evidence type="ECO:0000269" key="1">
    <source>
    </source>
</evidence>
<evidence type="ECO:0000305" key="2"/>
<evidence type="ECO:0000312" key="3">
    <source>
        <dbReference type="PDB" id="1VYC"/>
    </source>
</evidence>
<evidence type="ECO:0000312" key="4">
    <source>
        <dbReference type="PDB" id="2H8U"/>
    </source>
</evidence>
<evidence type="ECO:0007829" key="5">
    <source>
        <dbReference type="PDB" id="2H8U"/>
    </source>
</evidence>
<sequence length="65" mass="7216">RKCLIKYSQANESSKTCPSGQLLCLKKWEIGNPSGKEVKRGCVATCPKPWKNEIIQCCAKDKCNA</sequence>
<keyword id="KW-0002">3D-structure</keyword>
<keyword id="KW-0903">Direct protein sequencing</keyword>
<keyword id="KW-1015">Disulfide bond</keyword>
<keyword id="KW-0964">Secreted</keyword>
<keyword id="KW-0800">Toxin</keyword>
<reference key="1">
    <citation type="journal article" date="2002" name="Acta Crystallogr. D">
        <title>Crystallization and preliminary X-ray analysis of bucain, a novel toxin from the Malayan krait Bungarus candidus.</title>
        <authorList>
            <person name="Watanabe L."/>
            <person name="Nirthanan S."/>
            <person name="Rajaseger G."/>
            <person name="Polikarpov I."/>
            <person name="Kini R.M."/>
            <person name="Arni R.K."/>
        </authorList>
    </citation>
    <scope>PROTEIN SEQUENCE</scope>
    <scope>X-RAY CRYSTALLOGRAPHY (1.61 ANGSTROMS)</scope>
    <scope>DISULFIDE BONDS</scope>
    <scope>MASS SPECTROMETRY</scope>
    <scope>SUBCELLULAR LOCATION</scope>
    <source>
        <tissue>Venom</tissue>
    </source>
</reference>
<feature type="chain" id="PRO_0000093535" description="Bucain" evidence="1">
    <location>
        <begin position="1"/>
        <end position="65"/>
    </location>
</feature>
<feature type="disulfide bond" evidence="1 3 4">
    <location>
        <begin position="3"/>
        <end position="24"/>
    </location>
</feature>
<feature type="disulfide bond" evidence="1 3 4">
    <location>
        <begin position="17"/>
        <end position="42"/>
    </location>
</feature>
<feature type="disulfide bond" evidence="1 3 4">
    <location>
        <begin position="46"/>
        <end position="57"/>
    </location>
</feature>
<feature type="disulfide bond" evidence="1 3 4">
    <location>
        <begin position="58"/>
        <end position="63"/>
    </location>
</feature>
<feature type="strand" evidence="5">
    <location>
        <begin position="2"/>
        <end position="7"/>
    </location>
</feature>
<feature type="strand" evidence="5">
    <location>
        <begin position="12"/>
        <end position="16"/>
    </location>
</feature>
<feature type="strand" evidence="5">
    <location>
        <begin position="23"/>
        <end position="31"/>
    </location>
</feature>
<feature type="strand" evidence="5">
    <location>
        <begin position="39"/>
        <end position="45"/>
    </location>
</feature>
<feature type="strand" evidence="5">
    <location>
        <begin position="53"/>
        <end position="58"/>
    </location>
</feature>
<protein>
    <recommendedName>
        <fullName>Bucain</fullName>
    </recommendedName>
</protein>